<keyword id="KW-0067">ATP-binding</keyword>
<keyword id="KW-0963">Cytoplasm</keyword>
<keyword id="KW-1015">Disulfide bond</keyword>
<keyword id="KW-0547">Nucleotide-binding</keyword>
<keyword id="KW-1185">Reference proteome</keyword>
<keyword id="KW-0694">RNA-binding</keyword>
<keyword id="KW-0808">Transferase</keyword>
<keyword id="KW-0819">tRNA processing</keyword>
<keyword id="KW-0820">tRNA-binding</keyword>
<protein>
    <recommendedName>
        <fullName evidence="1">tRNA-specific 2-thiouridylase MnmA</fullName>
        <ecNumber evidence="1">2.8.1.13</ecNumber>
    </recommendedName>
</protein>
<comment type="function">
    <text evidence="1">Catalyzes the 2-thiolation of uridine at the wobble position (U34) of tRNA, leading to the formation of s(2)U34.</text>
</comment>
<comment type="catalytic activity">
    <reaction evidence="1">
        <text>S-sulfanyl-L-cysteinyl-[protein] + uridine(34) in tRNA + AH2 + ATP = 2-thiouridine(34) in tRNA + L-cysteinyl-[protein] + A + AMP + diphosphate + H(+)</text>
        <dbReference type="Rhea" id="RHEA:47032"/>
        <dbReference type="Rhea" id="RHEA-COMP:10131"/>
        <dbReference type="Rhea" id="RHEA-COMP:11726"/>
        <dbReference type="Rhea" id="RHEA-COMP:11727"/>
        <dbReference type="Rhea" id="RHEA-COMP:11728"/>
        <dbReference type="ChEBI" id="CHEBI:13193"/>
        <dbReference type="ChEBI" id="CHEBI:15378"/>
        <dbReference type="ChEBI" id="CHEBI:17499"/>
        <dbReference type="ChEBI" id="CHEBI:29950"/>
        <dbReference type="ChEBI" id="CHEBI:30616"/>
        <dbReference type="ChEBI" id="CHEBI:33019"/>
        <dbReference type="ChEBI" id="CHEBI:61963"/>
        <dbReference type="ChEBI" id="CHEBI:65315"/>
        <dbReference type="ChEBI" id="CHEBI:87170"/>
        <dbReference type="ChEBI" id="CHEBI:456215"/>
        <dbReference type="EC" id="2.8.1.13"/>
    </reaction>
</comment>
<comment type="subcellular location">
    <subcellularLocation>
        <location evidence="1">Cytoplasm</location>
    </subcellularLocation>
</comment>
<comment type="similarity">
    <text evidence="1">Belongs to the MnmA/TRMU family.</text>
</comment>
<dbReference type="EC" id="2.8.1.13" evidence="1"/>
<dbReference type="EMBL" id="BA000026">
    <property type="protein sequence ID" value="BAC44617.1"/>
    <property type="molecule type" value="Genomic_DNA"/>
</dbReference>
<dbReference type="RefSeq" id="WP_011077646.1">
    <property type="nucleotide sequence ID" value="NC_004432.1"/>
</dbReference>
<dbReference type="SMR" id="Q8CXQ3"/>
<dbReference type="FunCoup" id="Q8CXQ3">
    <property type="interactions" value="242"/>
</dbReference>
<dbReference type="STRING" id="272633.gene:10731947"/>
<dbReference type="KEGG" id="mpe:MYPE8250"/>
<dbReference type="eggNOG" id="COG0482">
    <property type="taxonomic scope" value="Bacteria"/>
</dbReference>
<dbReference type="HOGENOM" id="CLU_035188_1_0_14"/>
<dbReference type="InParanoid" id="Q8CXQ3"/>
<dbReference type="Proteomes" id="UP000002522">
    <property type="component" value="Chromosome"/>
</dbReference>
<dbReference type="GO" id="GO:0005737">
    <property type="term" value="C:cytoplasm"/>
    <property type="evidence" value="ECO:0007669"/>
    <property type="project" value="UniProtKB-SubCell"/>
</dbReference>
<dbReference type="GO" id="GO:0005524">
    <property type="term" value="F:ATP binding"/>
    <property type="evidence" value="ECO:0007669"/>
    <property type="project" value="UniProtKB-KW"/>
</dbReference>
<dbReference type="GO" id="GO:0000049">
    <property type="term" value="F:tRNA binding"/>
    <property type="evidence" value="ECO:0007669"/>
    <property type="project" value="UniProtKB-KW"/>
</dbReference>
<dbReference type="GO" id="GO:0103016">
    <property type="term" value="F:tRNA-uridine 2-sulfurtransferase activity"/>
    <property type="evidence" value="ECO:0007669"/>
    <property type="project" value="UniProtKB-EC"/>
</dbReference>
<dbReference type="GO" id="GO:0002143">
    <property type="term" value="P:tRNA wobble position uridine thiolation"/>
    <property type="evidence" value="ECO:0007669"/>
    <property type="project" value="TreeGrafter"/>
</dbReference>
<dbReference type="CDD" id="cd01998">
    <property type="entry name" value="MnmA_TRMU-like"/>
    <property type="match status" value="1"/>
</dbReference>
<dbReference type="FunFam" id="2.30.30.280:FF:000001">
    <property type="entry name" value="tRNA-specific 2-thiouridylase MnmA"/>
    <property type="match status" value="1"/>
</dbReference>
<dbReference type="FunFam" id="3.40.50.620:FF:000115">
    <property type="entry name" value="tRNA-specific 2-thiouridylase MnmA"/>
    <property type="match status" value="1"/>
</dbReference>
<dbReference type="Gene3D" id="2.30.30.280">
    <property type="entry name" value="Adenine nucleotide alpha hydrolases-like domains"/>
    <property type="match status" value="1"/>
</dbReference>
<dbReference type="Gene3D" id="3.40.50.620">
    <property type="entry name" value="HUPs"/>
    <property type="match status" value="1"/>
</dbReference>
<dbReference type="Gene3D" id="2.40.30.10">
    <property type="entry name" value="Translation factors"/>
    <property type="match status" value="1"/>
</dbReference>
<dbReference type="HAMAP" id="MF_00144">
    <property type="entry name" value="tRNA_thiouridyl_MnmA"/>
    <property type="match status" value="1"/>
</dbReference>
<dbReference type="InterPro" id="IPR004506">
    <property type="entry name" value="MnmA-like"/>
</dbReference>
<dbReference type="InterPro" id="IPR046885">
    <property type="entry name" value="MnmA-like_C"/>
</dbReference>
<dbReference type="InterPro" id="IPR046884">
    <property type="entry name" value="MnmA-like_central"/>
</dbReference>
<dbReference type="InterPro" id="IPR023382">
    <property type="entry name" value="MnmA-like_central_sf"/>
</dbReference>
<dbReference type="InterPro" id="IPR014729">
    <property type="entry name" value="Rossmann-like_a/b/a_fold"/>
</dbReference>
<dbReference type="NCBIfam" id="NF001138">
    <property type="entry name" value="PRK00143.1"/>
    <property type="match status" value="1"/>
</dbReference>
<dbReference type="NCBIfam" id="TIGR00420">
    <property type="entry name" value="trmU"/>
    <property type="match status" value="1"/>
</dbReference>
<dbReference type="PANTHER" id="PTHR11933:SF5">
    <property type="entry name" value="MITOCHONDRIAL TRNA-SPECIFIC 2-THIOURIDYLASE 1"/>
    <property type="match status" value="1"/>
</dbReference>
<dbReference type="PANTHER" id="PTHR11933">
    <property type="entry name" value="TRNA 5-METHYLAMINOMETHYL-2-THIOURIDYLATE -METHYLTRANSFERASE"/>
    <property type="match status" value="1"/>
</dbReference>
<dbReference type="Pfam" id="PF03054">
    <property type="entry name" value="tRNA_Me_trans"/>
    <property type="match status" value="1"/>
</dbReference>
<dbReference type="Pfam" id="PF20258">
    <property type="entry name" value="tRNA_Me_trans_C"/>
    <property type="match status" value="1"/>
</dbReference>
<dbReference type="Pfam" id="PF20259">
    <property type="entry name" value="tRNA_Me_trans_M"/>
    <property type="match status" value="1"/>
</dbReference>
<dbReference type="SUPFAM" id="SSF52402">
    <property type="entry name" value="Adenine nucleotide alpha hydrolases-like"/>
    <property type="match status" value="1"/>
</dbReference>
<accession>Q8CXQ3</accession>
<sequence>MKKVIVGISGGVDSSVSAYLLKLRGYDVMGVFMQNWDPYINKESNNDAIKSKLDTCEAEYDYQIASKVCQRLGIKLERINFIKEYWDMVFEPFLDEYKKGLTPNPDILCNKYIKFGAFHKYCFENFDCDYIATGHYADVRFNQANNIYELLEAKDIEKDQTYFLCSLNQSQLSKSIFPLADLTKKEVREIANKIGLDNWDKKDSTGICFIGERNFKNFLHNYIDKKPGKIIDIDTSKEVGTHEGIHFYTIGQRKGLNLGGNSSRYFVCKKDISNNILYVTSNESKLKNLSSVVATCSYFNWIGYVPNNNKVEIRIRHSKNKINGHFKILKDNVVQFEFDSPEVISPGQYIVAYQKGVCLGGGPIKDNINE</sequence>
<name>MNMA_MALP2</name>
<organism>
    <name type="scientific">Malacoplasma penetrans (strain HF-2)</name>
    <name type="common">Mycoplasma penetrans</name>
    <dbReference type="NCBI Taxonomy" id="272633"/>
    <lineage>
        <taxon>Bacteria</taxon>
        <taxon>Bacillati</taxon>
        <taxon>Mycoplasmatota</taxon>
        <taxon>Mycoplasmoidales</taxon>
        <taxon>Mycoplasmoidaceae</taxon>
        <taxon>Malacoplasma</taxon>
    </lineage>
</organism>
<evidence type="ECO:0000255" key="1">
    <source>
        <dbReference type="HAMAP-Rule" id="MF_00144"/>
    </source>
</evidence>
<reference key="1">
    <citation type="journal article" date="2002" name="Nucleic Acids Res.">
        <title>The complete genomic sequence of Mycoplasma penetrans, an intracellular bacterial pathogen in humans.</title>
        <authorList>
            <person name="Sasaki Y."/>
            <person name="Ishikawa J."/>
            <person name="Yamashita A."/>
            <person name="Oshima K."/>
            <person name="Kenri T."/>
            <person name="Furuya K."/>
            <person name="Yoshino C."/>
            <person name="Horino A."/>
            <person name="Shiba T."/>
            <person name="Sasaki T."/>
            <person name="Hattori M."/>
        </authorList>
    </citation>
    <scope>NUCLEOTIDE SEQUENCE [LARGE SCALE GENOMIC DNA]</scope>
    <source>
        <strain>HF-2</strain>
    </source>
</reference>
<proteinExistence type="inferred from homology"/>
<feature type="chain" id="PRO_0000121653" description="tRNA-specific 2-thiouridylase MnmA">
    <location>
        <begin position="1"/>
        <end position="370"/>
    </location>
</feature>
<feature type="region of interest" description="Interaction with target base in tRNA" evidence="1">
    <location>
        <begin position="104"/>
        <end position="106"/>
    </location>
</feature>
<feature type="region of interest" description="Interaction with tRNA" evidence="1">
    <location>
        <begin position="158"/>
        <end position="160"/>
    </location>
</feature>
<feature type="active site" description="Nucleophile" evidence="1">
    <location>
        <position position="109"/>
    </location>
</feature>
<feature type="active site" description="Cysteine persulfide intermediate" evidence="1">
    <location>
        <position position="208"/>
    </location>
</feature>
<feature type="binding site" evidence="1">
    <location>
        <begin position="7"/>
        <end position="14"/>
    </location>
    <ligand>
        <name>ATP</name>
        <dbReference type="ChEBI" id="CHEBI:30616"/>
    </ligand>
</feature>
<feature type="binding site" evidence="1">
    <location>
        <position position="33"/>
    </location>
    <ligand>
        <name>ATP</name>
        <dbReference type="ChEBI" id="CHEBI:30616"/>
    </ligand>
</feature>
<feature type="binding site" evidence="1">
    <location>
        <position position="134"/>
    </location>
    <ligand>
        <name>ATP</name>
        <dbReference type="ChEBI" id="CHEBI:30616"/>
    </ligand>
</feature>
<feature type="site" description="Interaction with tRNA" evidence="1">
    <location>
        <position position="135"/>
    </location>
</feature>
<feature type="site" description="Interaction with tRNA" evidence="1">
    <location>
        <position position="348"/>
    </location>
</feature>
<feature type="disulfide bond" description="Alternate" evidence="1">
    <location>
        <begin position="109"/>
        <end position="208"/>
    </location>
</feature>
<gene>
    <name evidence="1" type="primary">mnmA</name>
    <name type="synonym">trmU</name>
    <name type="ordered locus">MYPE8250</name>
</gene>